<accession>Q5ASN8</accession>
<feature type="chain" id="PRO_0000348283" description="Putative peroxiredoxin prxA">
    <location>
        <begin position="1"/>
        <end position="168"/>
    </location>
</feature>
<feature type="domain" description="Thioredoxin" evidence="3">
    <location>
        <begin position="4"/>
        <end position="158"/>
    </location>
</feature>
<feature type="active site" description="Cysteine sulfenic acid (-SOH) intermediate" evidence="10">
    <location>
        <position position="61"/>
    </location>
</feature>
<feature type="disulfide bond" description="Interchain (with C-61); in linked form" evidence="2">
    <location>
        <position position="31"/>
    </location>
</feature>
<feature type="disulfide bond" description="Interchain (with C-31); in linked form" evidence="2">
    <location>
        <position position="61"/>
    </location>
</feature>
<keyword id="KW-0049">Antioxidant</keyword>
<keyword id="KW-1015">Disulfide bond</keyword>
<keyword id="KW-0560">Oxidoreductase</keyword>
<keyword id="KW-0575">Peroxidase</keyword>
<keyword id="KW-0676">Redox-active center</keyword>
<keyword id="KW-1185">Reference proteome</keyword>
<keyword id="KW-0346">Stress response</keyword>
<sequence length="168" mass="18527">MSGLKAGDSFPADVVFSYIPWTEEKGEITSCGIPINYYASKEWADKKVILFALPGAFTPVCSARHVPEYIERLPEIRAKGVDVVAVLAYNDAFVMSAWGKANGVKNDDILFLSDPEAKFSKSIGWADEEGRTKRYAIVLDHGKVTYAALEPAKNHLEFSSAETVIKHL</sequence>
<organism>
    <name type="scientific">Emericella nidulans (strain FGSC A4 / ATCC 38163 / CBS 112.46 / NRRL 194 / M139)</name>
    <name type="common">Aspergillus nidulans</name>
    <dbReference type="NCBI Taxonomy" id="227321"/>
    <lineage>
        <taxon>Eukaryota</taxon>
        <taxon>Fungi</taxon>
        <taxon>Dikarya</taxon>
        <taxon>Ascomycota</taxon>
        <taxon>Pezizomycotina</taxon>
        <taxon>Eurotiomycetes</taxon>
        <taxon>Eurotiomycetidae</taxon>
        <taxon>Eurotiales</taxon>
        <taxon>Aspergillaceae</taxon>
        <taxon>Aspergillus</taxon>
        <taxon>Aspergillus subgen. Nidulantes</taxon>
    </lineage>
</organism>
<name>PRX5_EMENI</name>
<reference key="1">
    <citation type="journal article" date="2005" name="Nature">
        <title>Sequencing of Aspergillus nidulans and comparative analysis with A. fumigatus and A. oryzae.</title>
        <authorList>
            <person name="Galagan J.E."/>
            <person name="Calvo S.E."/>
            <person name="Cuomo C."/>
            <person name="Ma L.-J."/>
            <person name="Wortman J.R."/>
            <person name="Batzoglou S."/>
            <person name="Lee S.-I."/>
            <person name="Bastuerkmen M."/>
            <person name="Spevak C.C."/>
            <person name="Clutterbuck J."/>
            <person name="Kapitonov V."/>
            <person name="Jurka J."/>
            <person name="Scazzocchio C."/>
            <person name="Farman M.L."/>
            <person name="Butler J."/>
            <person name="Purcell S."/>
            <person name="Harris S."/>
            <person name="Braus G.H."/>
            <person name="Draht O."/>
            <person name="Busch S."/>
            <person name="D'Enfert C."/>
            <person name="Bouchier C."/>
            <person name="Goldman G.H."/>
            <person name="Bell-Pedersen D."/>
            <person name="Griffiths-Jones S."/>
            <person name="Doonan J.H."/>
            <person name="Yu J."/>
            <person name="Vienken K."/>
            <person name="Pain A."/>
            <person name="Freitag M."/>
            <person name="Selker E.U."/>
            <person name="Archer D.B."/>
            <person name="Penalva M.A."/>
            <person name="Oakley B.R."/>
            <person name="Momany M."/>
            <person name="Tanaka T."/>
            <person name="Kumagai T."/>
            <person name="Asai K."/>
            <person name="Machida M."/>
            <person name="Nierman W.C."/>
            <person name="Denning D.W."/>
            <person name="Caddick M.X."/>
            <person name="Hynes M."/>
            <person name="Paoletti M."/>
            <person name="Fischer R."/>
            <person name="Miller B.L."/>
            <person name="Dyer P.S."/>
            <person name="Sachs M.S."/>
            <person name="Osmani S.A."/>
            <person name="Birren B.W."/>
        </authorList>
    </citation>
    <scope>NUCLEOTIDE SEQUENCE [LARGE SCALE GENOMIC DNA]</scope>
    <source>
        <strain>FGSC A4 / ATCC 38163 / CBS 112.46 / NRRL 194 / M139</strain>
    </source>
</reference>
<reference key="2">
    <citation type="journal article" date="2009" name="Fungal Genet. Biol.">
        <title>The 2008 update of the Aspergillus nidulans genome annotation: a community effort.</title>
        <authorList>
            <person name="Wortman J.R."/>
            <person name="Gilsenan J.M."/>
            <person name="Joardar V."/>
            <person name="Deegan J."/>
            <person name="Clutterbuck J."/>
            <person name="Andersen M.R."/>
            <person name="Archer D."/>
            <person name="Bencina M."/>
            <person name="Braus G."/>
            <person name="Coutinho P."/>
            <person name="von Dohren H."/>
            <person name="Doonan J."/>
            <person name="Driessen A.J."/>
            <person name="Durek P."/>
            <person name="Espeso E."/>
            <person name="Fekete E."/>
            <person name="Flipphi M."/>
            <person name="Estrada C.G."/>
            <person name="Geysens S."/>
            <person name="Goldman G."/>
            <person name="de Groot P.W."/>
            <person name="Hansen K."/>
            <person name="Harris S.D."/>
            <person name="Heinekamp T."/>
            <person name="Helmstaedt K."/>
            <person name="Henrissat B."/>
            <person name="Hofmann G."/>
            <person name="Homan T."/>
            <person name="Horio T."/>
            <person name="Horiuchi H."/>
            <person name="James S."/>
            <person name="Jones M."/>
            <person name="Karaffa L."/>
            <person name="Karanyi Z."/>
            <person name="Kato M."/>
            <person name="Keller N."/>
            <person name="Kelly D.E."/>
            <person name="Kiel J.A."/>
            <person name="Kim J.M."/>
            <person name="van der Klei I.J."/>
            <person name="Klis F.M."/>
            <person name="Kovalchuk A."/>
            <person name="Krasevec N."/>
            <person name="Kubicek C.P."/>
            <person name="Liu B."/>
            <person name="Maccabe A."/>
            <person name="Meyer V."/>
            <person name="Mirabito P."/>
            <person name="Miskei M."/>
            <person name="Mos M."/>
            <person name="Mullins J."/>
            <person name="Nelson D.R."/>
            <person name="Nielsen J."/>
            <person name="Oakley B.R."/>
            <person name="Osmani S.A."/>
            <person name="Pakula T."/>
            <person name="Paszewski A."/>
            <person name="Paulsen I."/>
            <person name="Pilsyk S."/>
            <person name="Pocsi I."/>
            <person name="Punt P.J."/>
            <person name="Ram A.F."/>
            <person name="Ren Q."/>
            <person name="Robellet X."/>
            <person name="Robson G."/>
            <person name="Seiboth B."/>
            <person name="van Solingen P."/>
            <person name="Specht T."/>
            <person name="Sun J."/>
            <person name="Taheri-Talesh N."/>
            <person name="Takeshita N."/>
            <person name="Ussery D."/>
            <person name="vanKuyk P.A."/>
            <person name="Visser H."/>
            <person name="van de Vondervoort P.J."/>
            <person name="de Vries R.P."/>
            <person name="Walton J."/>
            <person name="Xiang X."/>
            <person name="Xiong Y."/>
            <person name="Zeng A.P."/>
            <person name="Brandt B.W."/>
            <person name="Cornell M.J."/>
            <person name="van den Hondel C.A."/>
            <person name="Visser J."/>
            <person name="Oliver S.G."/>
            <person name="Turner G."/>
        </authorList>
    </citation>
    <scope>GENOME REANNOTATION</scope>
    <source>
        <strain>FGSC A4 / ATCC 38163 / CBS 112.46 / NRRL 194 / M139</strain>
    </source>
</reference>
<reference key="3">
    <citation type="journal article" date="2007" name="Fungal Genet. Biol.">
        <title>Proteome map of Aspergillus nidulans during osmoadaptation.</title>
        <authorList>
            <person name="Kim Y."/>
            <person name="Nandakumar M.P."/>
            <person name="Marten M.R."/>
        </authorList>
    </citation>
    <scope>INDUCTION</scope>
    <scope>IDENTIFICATION BY MASS SPECTROMETRY</scope>
</reference>
<reference key="4">
    <citation type="journal article" date="2007" name="J. Biol. Chem.">
        <title>The thioredoxin system of the filamentous fungus Aspergillus nidulans: impact on development and oxidative stress response.</title>
        <authorList>
            <person name="Thoen M."/>
            <person name="Al-Abdallah Q."/>
            <person name="Hortschansky P."/>
            <person name="Brakhage A.A."/>
        </authorList>
    </citation>
    <scope>FUNCTION</scope>
    <scope>CATALYTIC ACTIVITY</scope>
    <scope>BIOPHYSICOCHEMICAL PROPERTIES</scope>
    <scope>INTERACTION WITH TRXA</scope>
</reference>
<reference key="5">
    <citation type="journal article" date="2010" name="Nucleic Acids Res.">
        <title>The CCAAT-binding complex coordinates the oxidative stress response in eukaryotes.</title>
        <authorList>
            <person name="Thoen M."/>
            <person name="Al Abdallah Q."/>
            <person name="Hortschansky P."/>
            <person name="Scharf D.H."/>
            <person name="Eisendle M."/>
            <person name="Haas H."/>
            <person name="Brakhage A.A."/>
        </authorList>
    </citation>
    <scope>INDUCTION</scope>
    <scope>ACTIVE SITE</scope>
</reference>
<gene>
    <name evidence="8" type="primary">prxA</name>
    <name evidence="7" type="synonym">PRX5</name>
    <name type="ORF">AN8692</name>
</gene>
<proteinExistence type="evidence at protein level"/>
<comment type="function">
    <text evidence="1 2 4">Thiol-specific peroxidase that catalyzes the reduction of hydrogen peroxide and organic hydroperoxides to water and alcohols, respectively. Plays a role in cell protection against oxidative stress by detoxifying peroxides and as sensor of hydrogen peroxide-mediated signaling events (By similarity). Involved in osmoadaptation (PubMed:17258477).</text>
</comment>
<comment type="catalytic activity">
    <reaction evidence="5">
        <text>a hydroperoxide + [thioredoxin]-dithiol = an alcohol + [thioredoxin]-disulfide + H2O</text>
        <dbReference type="Rhea" id="RHEA:62620"/>
        <dbReference type="Rhea" id="RHEA-COMP:10698"/>
        <dbReference type="Rhea" id="RHEA-COMP:10700"/>
        <dbReference type="ChEBI" id="CHEBI:15377"/>
        <dbReference type="ChEBI" id="CHEBI:29950"/>
        <dbReference type="ChEBI" id="CHEBI:30879"/>
        <dbReference type="ChEBI" id="CHEBI:35924"/>
        <dbReference type="ChEBI" id="CHEBI:50058"/>
        <dbReference type="EC" id="1.11.1.24"/>
    </reaction>
</comment>
<comment type="biophysicochemical properties">
    <kinetics>
        <KM evidence="5">4.3 uM for H(2)O(2)</KM>
        <Vmax evidence="5">6.8 umol/min/mg enzyme</Vmax>
    </kinetics>
</comment>
<comment type="subunit">
    <text evidence="2 5">Homodimer; disulfide-linked, upon oxidation (By similarity). Interacts with thioredoxin trxA (PubMed:17631497).</text>
</comment>
<comment type="induction">
    <text evidence="4 6">Down-regulated when grown with elevated levels of potassium chloride (PubMed:17258477). Induced under oxidative stress conditions dependent on transcription factor napA (PubMed:19965775).</text>
</comment>
<comment type="miscellaneous">
    <text evidence="2">The active site is a conserved redox-active cysteine residue, the peroxidatic cysteine (C(P)), which makes the nucleophilic attack on the peroxide substrate. The peroxide oxidizes the C(P)-SH to cysteine sulfenic acid (C(P)-SOH), which then reacts with another cysteine residue, the resolving cysteine (C(R)), to form a disulfide bridge. The disulfide is subsequently reduced by an appropriate electron donor to complete the catalytic cycle. In this typical 2-Cys Prx, C(R) is provided by the other dimeric subunit to form an intersubunit disulfide. The disulfide is subsequently reduced by thioredoxin.</text>
</comment>
<comment type="similarity">
    <text evidence="9">Belongs to the peroxiredoxin family. Prx5 subfamily.</text>
</comment>
<evidence type="ECO:0000250" key="1">
    <source>
        <dbReference type="UniProtKB" id="O43099"/>
    </source>
</evidence>
<evidence type="ECO:0000250" key="2">
    <source>
        <dbReference type="UniProtKB" id="P38013"/>
    </source>
</evidence>
<evidence type="ECO:0000255" key="3">
    <source>
        <dbReference type="PROSITE-ProRule" id="PRU00691"/>
    </source>
</evidence>
<evidence type="ECO:0000269" key="4">
    <source>
    </source>
</evidence>
<evidence type="ECO:0000269" key="5">
    <source>
    </source>
</evidence>
<evidence type="ECO:0000269" key="6">
    <source>
    </source>
</evidence>
<evidence type="ECO:0000303" key="7">
    <source>
    </source>
</evidence>
<evidence type="ECO:0000303" key="8">
    <source>
    </source>
</evidence>
<evidence type="ECO:0000305" key="9"/>
<evidence type="ECO:0000305" key="10">
    <source>
    </source>
</evidence>
<protein>
    <recommendedName>
        <fullName evidence="9">Putative peroxiredoxin prxA</fullName>
        <shortName>Prx</shortName>
        <ecNumber evidence="5">1.11.1.24</ecNumber>
    </recommendedName>
    <alternativeName>
        <fullName>Thioredoxin peroxidase</fullName>
        <shortName>TPx</shortName>
    </alternativeName>
    <alternativeName>
        <fullName evidence="9">Thioredoxin-dependent peroxiredoxin</fullName>
    </alternativeName>
</protein>
<dbReference type="EC" id="1.11.1.24" evidence="5"/>
<dbReference type="EMBL" id="AACD01000160">
    <property type="protein sequence ID" value="EAA60241.1"/>
    <property type="molecule type" value="Genomic_DNA"/>
</dbReference>
<dbReference type="EMBL" id="BN001303">
    <property type="status" value="NOT_ANNOTATED_CDS"/>
    <property type="molecule type" value="Genomic_DNA"/>
</dbReference>
<dbReference type="RefSeq" id="XP_681961.1">
    <property type="nucleotide sequence ID" value="XM_676869.1"/>
</dbReference>
<dbReference type="SMR" id="Q5ASN8"/>
<dbReference type="FunCoup" id="Q5ASN8">
    <property type="interactions" value="575"/>
</dbReference>
<dbReference type="STRING" id="227321.Q5ASN8"/>
<dbReference type="VEuPathDB" id="FungiDB:AN8692"/>
<dbReference type="HOGENOM" id="CLU_072440_1_1_1"/>
<dbReference type="InParanoid" id="Q5ASN8"/>
<dbReference type="Proteomes" id="UP000000560">
    <property type="component" value="Chromosome III"/>
</dbReference>
<dbReference type="GO" id="GO:0005737">
    <property type="term" value="C:cytoplasm"/>
    <property type="evidence" value="ECO:0000318"/>
    <property type="project" value="GO_Central"/>
</dbReference>
<dbReference type="GO" id="GO:0005576">
    <property type="term" value="C:extracellular region"/>
    <property type="evidence" value="ECO:0000314"/>
    <property type="project" value="AspGD"/>
</dbReference>
<dbReference type="GO" id="GO:0005739">
    <property type="term" value="C:mitochondrion"/>
    <property type="evidence" value="ECO:0000318"/>
    <property type="project" value="GO_Central"/>
</dbReference>
<dbReference type="GO" id="GO:0005777">
    <property type="term" value="C:peroxisome"/>
    <property type="evidence" value="ECO:0000318"/>
    <property type="project" value="GO_Central"/>
</dbReference>
<dbReference type="GO" id="GO:0008379">
    <property type="term" value="F:thioredoxin peroxidase activity"/>
    <property type="evidence" value="ECO:0000314"/>
    <property type="project" value="AspGD"/>
</dbReference>
<dbReference type="GO" id="GO:0045454">
    <property type="term" value="P:cell redox homeostasis"/>
    <property type="evidence" value="ECO:0000318"/>
    <property type="project" value="GO_Central"/>
</dbReference>
<dbReference type="GO" id="GO:0071470">
    <property type="term" value="P:cellular response to osmotic stress"/>
    <property type="evidence" value="ECO:0000270"/>
    <property type="project" value="AspGD"/>
</dbReference>
<dbReference type="GO" id="GO:0034599">
    <property type="term" value="P:cellular response to oxidative stress"/>
    <property type="evidence" value="ECO:0000270"/>
    <property type="project" value="AspGD"/>
</dbReference>
<dbReference type="GO" id="GO:0042744">
    <property type="term" value="P:hydrogen peroxide catabolic process"/>
    <property type="evidence" value="ECO:0000318"/>
    <property type="project" value="GO_Central"/>
</dbReference>
<dbReference type="CDD" id="cd03013">
    <property type="entry name" value="PRX5_like"/>
    <property type="match status" value="1"/>
</dbReference>
<dbReference type="FunFam" id="3.40.30.10:FF:000020">
    <property type="entry name" value="Peroxiredoxin"/>
    <property type="match status" value="1"/>
</dbReference>
<dbReference type="Gene3D" id="3.40.30.10">
    <property type="entry name" value="Glutaredoxin"/>
    <property type="match status" value="1"/>
</dbReference>
<dbReference type="InterPro" id="IPR037944">
    <property type="entry name" value="PRX5-like"/>
</dbReference>
<dbReference type="InterPro" id="IPR013740">
    <property type="entry name" value="Redoxin"/>
</dbReference>
<dbReference type="InterPro" id="IPR036249">
    <property type="entry name" value="Thioredoxin-like_sf"/>
</dbReference>
<dbReference type="InterPro" id="IPR013766">
    <property type="entry name" value="Thioredoxin_domain"/>
</dbReference>
<dbReference type="PANTHER" id="PTHR10430">
    <property type="entry name" value="PEROXIREDOXIN"/>
    <property type="match status" value="1"/>
</dbReference>
<dbReference type="PANTHER" id="PTHR10430:SF30">
    <property type="entry name" value="PEROXIREDOXIN PRXA-RELATED"/>
    <property type="match status" value="1"/>
</dbReference>
<dbReference type="Pfam" id="PF08534">
    <property type="entry name" value="Redoxin"/>
    <property type="match status" value="1"/>
</dbReference>
<dbReference type="SUPFAM" id="SSF52833">
    <property type="entry name" value="Thioredoxin-like"/>
    <property type="match status" value="1"/>
</dbReference>
<dbReference type="PROSITE" id="PS51352">
    <property type="entry name" value="THIOREDOXIN_2"/>
    <property type="match status" value="1"/>
</dbReference>